<gene>
    <name evidence="1" type="primary">nusB</name>
    <name type="ordered locus">Bcep18194_A4056</name>
</gene>
<dbReference type="EMBL" id="CP000151">
    <property type="protein sequence ID" value="ABB07653.1"/>
    <property type="molecule type" value="Genomic_DNA"/>
</dbReference>
<dbReference type="RefSeq" id="WP_011351234.1">
    <property type="nucleotide sequence ID" value="NC_007510.1"/>
</dbReference>
<dbReference type="SMR" id="Q39IR3"/>
<dbReference type="GeneID" id="45093955"/>
<dbReference type="KEGG" id="bur:Bcep18194_A4056"/>
<dbReference type="PATRIC" id="fig|482957.22.peg.936"/>
<dbReference type="HOGENOM" id="CLU_087843_4_1_4"/>
<dbReference type="Proteomes" id="UP000002705">
    <property type="component" value="Chromosome 1"/>
</dbReference>
<dbReference type="GO" id="GO:0005829">
    <property type="term" value="C:cytosol"/>
    <property type="evidence" value="ECO:0007669"/>
    <property type="project" value="TreeGrafter"/>
</dbReference>
<dbReference type="GO" id="GO:0003723">
    <property type="term" value="F:RNA binding"/>
    <property type="evidence" value="ECO:0007669"/>
    <property type="project" value="UniProtKB-UniRule"/>
</dbReference>
<dbReference type="GO" id="GO:0006353">
    <property type="term" value="P:DNA-templated transcription termination"/>
    <property type="evidence" value="ECO:0007669"/>
    <property type="project" value="UniProtKB-UniRule"/>
</dbReference>
<dbReference type="GO" id="GO:0031564">
    <property type="term" value="P:transcription antitermination"/>
    <property type="evidence" value="ECO:0007669"/>
    <property type="project" value="UniProtKB-KW"/>
</dbReference>
<dbReference type="Gene3D" id="1.10.940.10">
    <property type="entry name" value="NusB-like"/>
    <property type="match status" value="1"/>
</dbReference>
<dbReference type="HAMAP" id="MF_00073">
    <property type="entry name" value="NusB"/>
    <property type="match status" value="1"/>
</dbReference>
<dbReference type="InterPro" id="IPR035926">
    <property type="entry name" value="NusB-like_sf"/>
</dbReference>
<dbReference type="InterPro" id="IPR011605">
    <property type="entry name" value="NusB_fam"/>
</dbReference>
<dbReference type="InterPro" id="IPR006027">
    <property type="entry name" value="NusB_RsmB_TIM44"/>
</dbReference>
<dbReference type="NCBIfam" id="TIGR01951">
    <property type="entry name" value="nusB"/>
    <property type="match status" value="1"/>
</dbReference>
<dbReference type="PANTHER" id="PTHR11078:SF3">
    <property type="entry name" value="ANTITERMINATION NUSB DOMAIN-CONTAINING PROTEIN"/>
    <property type="match status" value="1"/>
</dbReference>
<dbReference type="PANTHER" id="PTHR11078">
    <property type="entry name" value="N UTILIZATION SUBSTANCE PROTEIN B-RELATED"/>
    <property type="match status" value="1"/>
</dbReference>
<dbReference type="Pfam" id="PF01029">
    <property type="entry name" value="NusB"/>
    <property type="match status" value="1"/>
</dbReference>
<dbReference type="SUPFAM" id="SSF48013">
    <property type="entry name" value="NusB-like"/>
    <property type="match status" value="1"/>
</dbReference>
<sequence>MKKSARRQSRELATQGLYQWLLSNASSGEIDAQLRGALGYDKADKELLEAILHGVIREHATLVEALTPSLDRPIEQLSPVERAVLLIATFELTHHVETPYRVIINEAVELAKTFGGSDGYKYVNGVLDKLAAKLRPAETQARRNG</sequence>
<evidence type="ECO:0000255" key="1">
    <source>
        <dbReference type="HAMAP-Rule" id="MF_00073"/>
    </source>
</evidence>
<accession>Q39IR3</accession>
<protein>
    <recommendedName>
        <fullName evidence="1">Transcription antitermination protein NusB</fullName>
    </recommendedName>
    <alternativeName>
        <fullName evidence="1">Antitermination factor NusB</fullName>
    </alternativeName>
</protein>
<proteinExistence type="inferred from homology"/>
<name>NUSB_BURL3</name>
<keyword id="KW-0694">RNA-binding</keyword>
<keyword id="KW-0804">Transcription</keyword>
<keyword id="KW-0889">Transcription antitermination</keyword>
<keyword id="KW-0805">Transcription regulation</keyword>
<organism>
    <name type="scientific">Burkholderia lata (strain ATCC 17760 / DSM 23089 / LMG 22485 / NCIMB 9086 / R18194 / 383)</name>
    <dbReference type="NCBI Taxonomy" id="482957"/>
    <lineage>
        <taxon>Bacteria</taxon>
        <taxon>Pseudomonadati</taxon>
        <taxon>Pseudomonadota</taxon>
        <taxon>Betaproteobacteria</taxon>
        <taxon>Burkholderiales</taxon>
        <taxon>Burkholderiaceae</taxon>
        <taxon>Burkholderia</taxon>
        <taxon>Burkholderia cepacia complex</taxon>
    </lineage>
</organism>
<comment type="function">
    <text evidence="1">Involved in transcription antitermination. Required for transcription of ribosomal RNA (rRNA) genes. Binds specifically to the boxA antiterminator sequence of the ribosomal RNA (rrn) operons.</text>
</comment>
<comment type="similarity">
    <text evidence="1">Belongs to the NusB family.</text>
</comment>
<reference key="1">
    <citation type="submission" date="2005-10" db="EMBL/GenBank/DDBJ databases">
        <title>Complete sequence of chromosome 1 of Burkholderia sp. 383.</title>
        <authorList>
            <consortium name="US DOE Joint Genome Institute"/>
            <person name="Copeland A."/>
            <person name="Lucas S."/>
            <person name="Lapidus A."/>
            <person name="Barry K."/>
            <person name="Detter J.C."/>
            <person name="Glavina T."/>
            <person name="Hammon N."/>
            <person name="Israni S."/>
            <person name="Pitluck S."/>
            <person name="Chain P."/>
            <person name="Malfatti S."/>
            <person name="Shin M."/>
            <person name="Vergez L."/>
            <person name="Schmutz J."/>
            <person name="Larimer F."/>
            <person name="Land M."/>
            <person name="Kyrpides N."/>
            <person name="Lykidis A."/>
            <person name="Richardson P."/>
        </authorList>
    </citation>
    <scope>NUCLEOTIDE SEQUENCE [LARGE SCALE GENOMIC DNA]</scope>
    <source>
        <strain>ATCC 17760 / DSM 23089 / LMG 22485 / NCIMB 9086 / R18194 / 383</strain>
    </source>
</reference>
<feature type="chain" id="PRO_0000265498" description="Transcription antitermination protein NusB">
    <location>
        <begin position="1"/>
        <end position="145"/>
    </location>
</feature>